<comment type="function">
    <text evidence="1">Synthesizes selenophosphate from selenide and ATP.</text>
</comment>
<comment type="catalytic activity">
    <reaction evidence="1">
        <text>hydrogenselenide + ATP + H2O = selenophosphate + AMP + phosphate + 2 H(+)</text>
        <dbReference type="Rhea" id="RHEA:18737"/>
        <dbReference type="ChEBI" id="CHEBI:15377"/>
        <dbReference type="ChEBI" id="CHEBI:15378"/>
        <dbReference type="ChEBI" id="CHEBI:16144"/>
        <dbReference type="ChEBI" id="CHEBI:29317"/>
        <dbReference type="ChEBI" id="CHEBI:30616"/>
        <dbReference type="ChEBI" id="CHEBI:43474"/>
        <dbReference type="ChEBI" id="CHEBI:456215"/>
        <dbReference type="EC" id="2.7.9.3"/>
    </reaction>
</comment>
<comment type="cofactor">
    <cofactor evidence="1">
        <name>Mg(2+)</name>
        <dbReference type="ChEBI" id="CHEBI:18420"/>
    </cofactor>
    <text evidence="1">Binds 1 Mg(2+) ion per monomer.</text>
</comment>
<comment type="subunit">
    <text evidence="1">Homodimer.</text>
</comment>
<comment type="similarity">
    <text evidence="1">Belongs to the selenophosphate synthase 1 family. Class I subfamily.</text>
</comment>
<dbReference type="EC" id="2.7.9.3" evidence="1"/>
<dbReference type="EMBL" id="CP000753">
    <property type="protein sequence ID" value="ABS06344.1"/>
    <property type="molecule type" value="Genomic_DNA"/>
</dbReference>
<dbReference type="RefSeq" id="WP_006087518.1">
    <property type="nucleotide sequence ID" value="NC_009665.1"/>
</dbReference>
<dbReference type="SMR" id="A6WHQ5"/>
<dbReference type="GeneID" id="11770531"/>
<dbReference type="KEGG" id="sbm:Shew185_0173"/>
<dbReference type="HOGENOM" id="CLU_032859_0_1_6"/>
<dbReference type="GO" id="GO:0005737">
    <property type="term" value="C:cytoplasm"/>
    <property type="evidence" value="ECO:0007669"/>
    <property type="project" value="TreeGrafter"/>
</dbReference>
<dbReference type="GO" id="GO:0005524">
    <property type="term" value="F:ATP binding"/>
    <property type="evidence" value="ECO:0007669"/>
    <property type="project" value="UniProtKB-UniRule"/>
</dbReference>
<dbReference type="GO" id="GO:0000287">
    <property type="term" value="F:magnesium ion binding"/>
    <property type="evidence" value="ECO:0007669"/>
    <property type="project" value="UniProtKB-UniRule"/>
</dbReference>
<dbReference type="GO" id="GO:0004756">
    <property type="term" value="F:selenide, water dikinase activity"/>
    <property type="evidence" value="ECO:0007669"/>
    <property type="project" value="UniProtKB-UniRule"/>
</dbReference>
<dbReference type="GO" id="GO:0016260">
    <property type="term" value="P:selenocysteine biosynthetic process"/>
    <property type="evidence" value="ECO:0007669"/>
    <property type="project" value="InterPro"/>
</dbReference>
<dbReference type="CDD" id="cd02195">
    <property type="entry name" value="SelD"/>
    <property type="match status" value="1"/>
</dbReference>
<dbReference type="FunFam" id="3.30.1330.10:FF:000003">
    <property type="entry name" value="Selenide, water dikinase"/>
    <property type="match status" value="1"/>
</dbReference>
<dbReference type="FunFam" id="3.90.650.10:FF:000004">
    <property type="entry name" value="Selenide, water dikinase"/>
    <property type="match status" value="1"/>
</dbReference>
<dbReference type="Gene3D" id="3.90.650.10">
    <property type="entry name" value="PurM-like C-terminal domain"/>
    <property type="match status" value="1"/>
</dbReference>
<dbReference type="Gene3D" id="3.30.1330.10">
    <property type="entry name" value="PurM-like, N-terminal domain"/>
    <property type="match status" value="1"/>
</dbReference>
<dbReference type="HAMAP" id="MF_00625">
    <property type="entry name" value="SelD"/>
    <property type="match status" value="1"/>
</dbReference>
<dbReference type="InterPro" id="IPR010918">
    <property type="entry name" value="PurM-like_C_dom"/>
</dbReference>
<dbReference type="InterPro" id="IPR036676">
    <property type="entry name" value="PurM-like_C_sf"/>
</dbReference>
<dbReference type="InterPro" id="IPR016188">
    <property type="entry name" value="PurM-like_N"/>
</dbReference>
<dbReference type="InterPro" id="IPR036921">
    <property type="entry name" value="PurM-like_N_sf"/>
</dbReference>
<dbReference type="InterPro" id="IPR023061">
    <property type="entry name" value="SelD_I"/>
</dbReference>
<dbReference type="InterPro" id="IPR004536">
    <property type="entry name" value="SPS/SelD"/>
</dbReference>
<dbReference type="NCBIfam" id="NF002098">
    <property type="entry name" value="PRK00943.1"/>
    <property type="match status" value="1"/>
</dbReference>
<dbReference type="NCBIfam" id="TIGR00476">
    <property type="entry name" value="selD"/>
    <property type="match status" value="1"/>
</dbReference>
<dbReference type="PANTHER" id="PTHR10256:SF0">
    <property type="entry name" value="INACTIVE SELENIDE, WATER DIKINASE-LIKE PROTEIN-RELATED"/>
    <property type="match status" value="1"/>
</dbReference>
<dbReference type="PANTHER" id="PTHR10256">
    <property type="entry name" value="SELENIDE, WATER DIKINASE"/>
    <property type="match status" value="1"/>
</dbReference>
<dbReference type="Pfam" id="PF00586">
    <property type="entry name" value="AIRS"/>
    <property type="match status" value="1"/>
</dbReference>
<dbReference type="Pfam" id="PF02769">
    <property type="entry name" value="AIRS_C"/>
    <property type="match status" value="1"/>
</dbReference>
<dbReference type="PIRSF" id="PIRSF036407">
    <property type="entry name" value="Selenphspht_syn"/>
    <property type="match status" value="1"/>
</dbReference>
<dbReference type="SUPFAM" id="SSF56042">
    <property type="entry name" value="PurM C-terminal domain-like"/>
    <property type="match status" value="1"/>
</dbReference>
<dbReference type="SUPFAM" id="SSF55326">
    <property type="entry name" value="PurM N-terminal domain-like"/>
    <property type="match status" value="1"/>
</dbReference>
<evidence type="ECO:0000255" key="1">
    <source>
        <dbReference type="HAMAP-Rule" id="MF_00625"/>
    </source>
</evidence>
<proteinExistence type="inferred from homology"/>
<protein>
    <recommendedName>
        <fullName evidence="1">Selenide, water dikinase</fullName>
        <ecNumber evidence="1">2.7.9.3</ecNumber>
    </recommendedName>
    <alternativeName>
        <fullName evidence="1">Selenium donor protein</fullName>
    </alternativeName>
    <alternativeName>
        <fullName evidence="1">Selenophosphate synthase</fullName>
    </alternativeName>
</protein>
<gene>
    <name evidence="1" type="primary">selD</name>
    <name type="ordered locus">Shew185_0173</name>
</gene>
<feature type="chain" id="PRO_1000051602" description="Selenide, water dikinase">
    <location>
        <begin position="1"/>
        <end position="352"/>
    </location>
</feature>
<feature type="active site" evidence="1">
    <location>
        <position position="23"/>
    </location>
</feature>
<feature type="binding site" description="in other chain" evidence="1">
    <location>
        <position position="26"/>
    </location>
    <ligand>
        <name>ATP</name>
        <dbReference type="ChEBI" id="CHEBI:30616"/>
        <note>ligand shared between dimeric partners</note>
    </ligand>
</feature>
<feature type="binding site" description="in other chain" evidence="1">
    <location>
        <begin position="54"/>
        <end position="56"/>
    </location>
    <ligand>
        <name>ATP</name>
        <dbReference type="ChEBI" id="CHEBI:30616"/>
        <note>ligand shared between dimeric partners</note>
    </ligand>
</feature>
<feature type="binding site" evidence="1">
    <location>
        <position position="57"/>
    </location>
    <ligand>
        <name>Mg(2+)</name>
        <dbReference type="ChEBI" id="CHEBI:18420"/>
    </ligand>
</feature>
<feature type="binding site" description="in other chain" evidence="1">
    <location>
        <position position="74"/>
    </location>
    <ligand>
        <name>ATP</name>
        <dbReference type="ChEBI" id="CHEBI:30616"/>
        <note>ligand shared between dimeric partners</note>
    </ligand>
</feature>
<feature type="binding site" description="in other chain" evidence="1">
    <location>
        <position position="97"/>
    </location>
    <ligand>
        <name>ATP</name>
        <dbReference type="ChEBI" id="CHEBI:30616"/>
        <note>ligand shared between dimeric partners</note>
    </ligand>
</feature>
<feature type="binding site" evidence="1">
    <location>
        <position position="97"/>
    </location>
    <ligand>
        <name>Mg(2+)</name>
        <dbReference type="ChEBI" id="CHEBI:18420"/>
    </ligand>
</feature>
<feature type="binding site" evidence="1">
    <location>
        <begin position="145"/>
        <end position="147"/>
    </location>
    <ligand>
        <name>ATP</name>
        <dbReference type="ChEBI" id="CHEBI:30616"/>
        <note>ligand shared between dimeric partners</note>
    </ligand>
</feature>
<feature type="binding site" evidence="1">
    <location>
        <position position="233"/>
    </location>
    <ligand>
        <name>Mg(2+)</name>
        <dbReference type="ChEBI" id="CHEBI:18420"/>
    </ligand>
</feature>
<feature type="site" description="Important for catalytic activity" evidence="1">
    <location>
        <position position="26"/>
    </location>
</feature>
<organism>
    <name type="scientific">Shewanella baltica (strain OS185)</name>
    <dbReference type="NCBI Taxonomy" id="402882"/>
    <lineage>
        <taxon>Bacteria</taxon>
        <taxon>Pseudomonadati</taxon>
        <taxon>Pseudomonadota</taxon>
        <taxon>Gammaproteobacteria</taxon>
        <taxon>Alteromonadales</taxon>
        <taxon>Shewanellaceae</taxon>
        <taxon>Shewanella</taxon>
    </lineage>
</organism>
<keyword id="KW-0067">ATP-binding</keyword>
<keyword id="KW-0418">Kinase</keyword>
<keyword id="KW-0460">Magnesium</keyword>
<keyword id="KW-0479">Metal-binding</keyword>
<keyword id="KW-0547">Nucleotide-binding</keyword>
<keyword id="KW-0711">Selenium</keyword>
<keyword id="KW-0808">Transferase</keyword>
<name>SELD_SHEB8</name>
<accession>A6WHQ5</accession>
<sequence length="352" mass="37029">MSDSPVTLPESIKLTEYSHGAGCGCKISPKVLSTILASQLPVFTDPNLLVGNQSRDDAAVYKLNDDIGIISTTDFFMPIVDDPFTFGRIAATNAISDIYAMGGTPIMAIAILGWPINKLPAEVAQQVVDGGRQACMEAGIMLAGGHSIDAPEPIFGLAVTGQIALTDLKQNDTAKAGDRLYLTKPIGIGILTTAQKQKKLQDEDSHIAVNAMCQLNTIGTTIAKISGVNALTDVTGFGLAGHLLEMCQGAKLTAKLKFDAVPLLPRALDYLALGCVPGGTHRNYDSYGEHLPELSEHQKAILCDPQTSGGLLVAVSAEAEAELIALLDAHHIAPICIGSLETPTTEANVVLY</sequence>
<reference key="1">
    <citation type="submission" date="2007-07" db="EMBL/GenBank/DDBJ databases">
        <title>Complete sequence of chromosome of Shewanella baltica OS185.</title>
        <authorList>
            <consortium name="US DOE Joint Genome Institute"/>
            <person name="Copeland A."/>
            <person name="Lucas S."/>
            <person name="Lapidus A."/>
            <person name="Barry K."/>
            <person name="Glavina del Rio T."/>
            <person name="Dalin E."/>
            <person name="Tice H."/>
            <person name="Pitluck S."/>
            <person name="Sims D."/>
            <person name="Brettin T."/>
            <person name="Bruce D."/>
            <person name="Detter J.C."/>
            <person name="Han C."/>
            <person name="Schmutz J."/>
            <person name="Larimer F."/>
            <person name="Land M."/>
            <person name="Hauser L."/>
            <person name="Kyrpides N."/>
            <person name="Mikhailova N."/>
            <person name="Brettar I."/>
            <person name="Rodrigues J."/>
            <person name="Konstantinidis K."/>
            <person name="Tiedje J."/>
            <person name="Richardson P."/>
        </authorList>
    </citation>
    <scope>NUCLEOTIDE SEQUENCE [LARGE SCALE GENOMIC DNA]</scope>
    <source>
        <strain>OS185</strain>
    </source>
</reference>